<evidence type="ECO:0000250" key="1">
    <source>
        <dbReference type="UniProtKB" id="P17029"/>
    </source>
</evidence>
<evidence type="ECO:0000255" key="2">
    <source>
        <dbReference type="PROSITE-ProRule" id="PRU00042"/>
    </source>
</evidence>
<evidence type="ECO:0000255" key="3">
    <source>
        <dbReference type="PROSITE-ProRule" id="PRU00119"/>
    </source>
</evidence>
<evidence type="ECO:0000255" key="4">
    <source>
        <dbReference type="PROSITE-ProRule" id="PRU00187"/>
    </source>
</evidence>
<evidence type="ECO:0000256" key="5">
    <source>
        <dbReference type="SAM" id="MobiDB-lite"/>
    </source>
</evidence>
<evidence type="ECO:0000305" key="6"/>
<gene>
    <name type="primary">ZKSCAN1</name>
</gene>
<dbReference type="EMBL" id="CR860626">
    <property type="protein sequence ID" value="CAH92746.1"/>
    <property type="molecule type" value="mRNA"/>
</dbReference>
<dbReference type="RefSeq" id="NP_001126601.1">
    <property type="nucleotide sequence ID" value="NM_001133129.1"/>
</dbReference>
<dbReference type="SMR" id="Q5R670"/>
<dbReference type="FunCoup" id="Q5R670">
    <property type="interactions" value="882"/>
</dbReference>
<dbReference type="STRING" id="9601.ENSPPYP00000019491"/>
<dbReference type="Ensembl" id="ENSPPYT00000020261.2">
    <property type="protein sequence ID" value="ENSPPYP00000019491.2"/>
    <property type="gene ID" value="ENSPPYG00000017394.3"/>
</dbReference>
<dbReference type="GeneID" id="100173598"/>
<dbReference type="KEGG" id="pon:100173598"/>
<dbReference type="CTD" id="7586"/>
<dbReference type="eggNOG" id="KOG1721">
    <property type="taxonomic scope" value="Eukaryota"/>
</dbReference>
<dbReference type="GeneTree" id="ENSGT00940000161592"/>
<dbReference type="InParanoid" id="Q5R670"/>
<dbReference type="OMA" id="IHNRERA"/>
<dbReference type="OrthoDB" id="6354171at2759"/>
<dbReference type="Proteomes" id="UP000001595">
    <property type="component" value="Chromosome 7"/>
</dbReference>
<dbReference type="GO" id="GO:0005634">
    <property type="term" value="C:nucleus"/>
    <property type="evidence" value="ECO:0007669"/>
    <property type="project" value="UniProtKB-SubCell"/>
</dbReference>
<dbReference type="GO" id="GO:0000981">
    <property type="term" value="F:DNA-binding transcription factor activity, RNA polymerase II-specific"/>
    <property type="evidence" value="ECO:0007669"/>
    <property type="project" value="TreeGrafter"/>
</dbReference>
<dbReference type="GO" id="GO:0000978">
    <property type="term" value="F:RNA polymerase II cis-regulatory region sequence-specific DNA binding"/>
    <property type="evidence" value="ECO:0007669"/>
    <property type="project" value="TreeGrafter"/>
</dbReference>
<dbReference type="GO" id="GO:0008270">
    <property type="term" value="F:zinc ion binding"/>
    <property type="evidence" value="ECO:0007669"/>
    <property type="project" value="UniProtKB-KW"/>
</dbReference>
<dbReference type="CDD" id="cd07765">
    <property type="entry name" value="KRAB_A-box"/>
    <property type="match status" value="1"/>
</dbReference>
<dbReference type="CDD" id="cd07936">
    <property type="entry name" value="SCAN"/>
    <property type="match status" value="1"/>
</dbReference>
<dbReference type="FunFam" id="3.30.160.60:FF:004137">
    <property type="match status" value="1"/>
</dbReference>
<dbReference type="FunFam" id="3.30.160.60:FF:004935">
    <property type="match status" value="1"/>
</dbReference>
<dbReference type="FunFam" id="3.30.160.60:FF:000944">
    <property type="entry name" value="zinc finger protein 232 isoform X1"/>
    <property type="match status" value="1"/>
</dbReference>
<dbReference type="FunFam" id="1.10.4020.10:FF:000001">
    <property type="entry name" value="zinc finger protein 263 isoform X1"/>
    <property type="match status" value="1"/>
</dbReference>
<dbReference type="FunFam" id="3.30.160.60:FF:002278">
    <property type="entry name" value="Zinc finger protein 320"/>
    <property type="match status" value="1"/>
</dbReference>
<dbReference type="FunFam" id="3.30.160.60:FF:002402">
    <property type="entry name" value="Zinc finger protein 347"/>
    <property type="match status" value="1"/>
</dbReference>
<dbReference type="FunFam" id="3.30.160.60:FF:000307">
    <property type="entry name" value="Zinc finger protein ZFP69 isoform 1"/>
    <property type="match status" value="1"/>
</dbReference>
<dbReference type="FunFam" id="3.30.160.60:FF:000330">
    <property type="entry name" value="Zinc finger with KRAB and SCAN domains 1"/>
    <property type="match status" value="1"/>
</dbReference>
<dbReference type="FunFam" id="3.30.160.60:FF:000496">
    <property type="entry name" value="Zinc finger with KRAB and SCAN domains 1"/>
    <property type="match status" value="1"/>
</dbReference>
<dbReference type="Gene3D" id="6.10.140.140">
    <property type="match status" value="1"/>
</dbReference>
<dbReference type="Gene3D" id="3.30.160.60">
    <property type="entry name" value="Classic Zinc Finger"/>
    <property type="match status" value="6"/>
</dbReference>
<dbReference type="Gene3D" id="1.10.4020.10">
    <property type="entry name" value="DNA breaking-rejoining enzymes"/>
    <property type="match status" value="1"/>
</dbReference>
<dbReference type="InterPro" id="IPR001909">
    <property type="entry name" value="KRAB"/>
</dbReference>
<dbReference type="InterPro" id="IPR036051">
    <property type="entry name" value="KRAB_dom_sf"/>
</dbReference>
<dbReference type="InterPro" id="IPR003309">
    <property type="entry name" value="SCAN_dom"/>
</dbReference>
<dbReference type="InterPro" id="IPR038269">
    <property type="entry name" value="SCAN_sf"/>
</dbReference>
<dbReference type="InterPro" id="IPR036236">
    <property type="entry name" value="Znf_C2H2_sf"/>
</dbReference>
<dbReference type="InterPro" id="IPR013087">
    <property type="entry name" value="Znf_C2H2_type"/>
</dbReference>
<dbReference type="PANTHER" id="PTHR23235">
    <property type="entry name" value="KRUEPPEL-LIKE TRANSCRIPTION FACTOR"/>
    <property type="match status" value="1"/>
</dbReference>
<dbReference type="PANTHER" id="PTHR23235:SF142">
    <property type="entry name" value="ZINC FINGER PROTEIN 384"/>
    <property type="match status" value="1"/>
</dbReference>
<dbReference type="Pfam" id="PF01352">
    <property type="entry name" value="KRAB"/>
    <property type="match status" value="1"/>
</dbReference>
<dbReference type="Pfam" id="PF02023">
    <property type="entry name" value="SCAN"/>
    <property type="match status" value="1"/>
</dbReference>
<dbReference type="Pfam" id="PF00096">
    <property type="entry name" value="zf-C2H2"/>
    <property type="match status" value="6"/>
</dbReference>
<dbReference type="SMART" id="SM00349">
    <property type="entry name" value="KRAB"/>
    <property type="match status" value="1"/>
</dbReference>
<dbReference type="SMART" id="SM00431">
    <property type="entry name" value="SCAN"/>
    <property type="match status" value="1"/>
</dbReference>
<dbReference type="SMART" id="SM00355">
    <property type="entry name" value="ZnF_C2H2"/>
    <property type="match status" value="6"/>
</dbReference>
<dbReference type="SUPFAM" id="SSF57667">
    <property type="entry name" value="beta-beta-alpha zinc fingers"/>
    <property type="match status" value="4"/>
</dbReference>
<dbReference type="SUPFAM" id="SSF109640">
    <property type="entry name" value="KRAB domain (Kruppel-associated box)"/>
    <property type="match status" value="1"/>
</dbReference>
<dbReference type="SUPFAM" id="SSF47353">
    <property type="entry name" value="Retrovirus capsid dimerization domain-like"/>
    <property type="match status" value="1"/>
</dbReference>
<dbReference type="PROSITE" id="PS50805">
    <property type="entry name" value="KRAB"/>
    <property type="match status" value="1"/>
</dbReference>
<dbReference type="PROSITE" id="PS50804">
    <property type="entry name" value="SCAN_BOX"/>
    <property type="match status" value="1"/>
</dbReference>
<dbReference type="PROSITE" id="PS00028">
    <property type="entry name" value="ZINC_FINGER_C2H2_1"/>
    <property type="match status" value="6"/>
</dbReference>
<dbReference type="PROSITE" id="PS50157">
    <property type="entry name" value="ZINC_FINGER_C2H2_2"/>
    <property type="match status" value="6"/>
</dbReference>
<reference key="1">
    <citation type="submission" date="2004-11" db="EMBL/GenBank/DDBJ databases">
        <authorList>
            <consortium name="The German cDNA consortium"/>
        </authorList>
    </citation>
    <scope>NUCLEOTIDE SEQUENCE [LARGE SCALE MRNA]</scope>
    <source>
        <tissue>Brain cortex</tissue>
    </source>
</reference>
<protein>
    <recommendedName>
        <fullName>Zinc finger protein with KRAB and SCAN domains 1</fullName>
    </recommendedName>
</protein>
<sequence>MMTAESREATGLSPQAAQEKDGIVIVKVEEEDEEDHMWGQDSSLQDTPPPDPEIFRQRFRRFCYQNTFGPREALSRLKELCHQWLRPEINTKEQILELLVLEQFLSILPKELQVWLQEYRPDSGEEAVTLLEDLELDLSGQQVPGQVHGPEMLARGMVPLDPVQESSSFDLHHEATQSHFKHSSRKPRLLQSRALPAAHIPAPPHEGSPRDQAMASALFTADSQAMVKIEDMAVSLILEEWGCQNLARRNLSRDNKQENYGSAFPQGGENRNENEESTSKAETAEDSASHGETAGRFQKEFGEKRDQEGKTGERQQKNPEEKTGKEKRDSGPATGKDKKTITGERGPREKGKGLGRSFSLSSNFTTPEEVPTGTKSHRCDECGKCFTRSSSLIRHKIIHTGEKPYECSECGKAFSLNSNLVLHQRIHTGEKPHECNECGKAFSHSSNLILHQRIHSGEKPYECNECGKAFSQSSDLTKHQRIHTGEKPYECSECGKAFNRNSYLILHRRIHTREKPYKCTKCGKAFTRSSTLTLHHRIHARERASEYSPASLDAFGAFLKSCV</sequence>
<feature type="chain" id="PRO_0000047755" description="Zinc finger protein with KRAB and SCAN domains 1">
    <location>
        <begin position="1"/>
        <end position="563"/>
    </location>
</feature>
<feature type="domain" description="SCAN box" evidence="4">
    <location>
        <begin position="56"/>
        <end position="138"/>
    </location>
</feature>
<feature type="domain" description="KRAB" evidence="3">
    <location>
        <begin position="227"/>
        <end position="300"/>
    </location>
</feature>
<feature type="zinc finger region" description="C2H2-type 1" evidence="2">
    <location>
        <begin position="377"/>
        <end position="399"/>
    </location>
</feature>
<feature type="zinc finger region" description="C2H2-type 2" evidence="2">
    <location>
        <begin position="405"/>
        <end position="427"/>
    </location>
</feature>
<feature type="zinc finger region" description="C2H2-type 3" evidence="2">
    <location>
        <begin position="433"/>
        <end position="455"/>
    </location>
</feature>
<feature type="zinc finger region" description="C2H2-type 4" evidence="2">
    <location>
        <begin position="461"/>
        <end position="483"/>
    </location>
</feature>
<feature type="zinc finger region" description="C2H2-type 5" evidence="2">
    <location>
        <begin position="489"/>
        <end position="511"/>
    </location>
</feature>
<feature type="zinc finger region" description="C2H2-type 6" evidence="2">
    <location>
        <begin position="517"/>
        <end position="539"/>
    </location>
</feature>
<feature type="region of interest" description="Disordered" evidence="5">
    <location>
        <begin position="1"/>
        <end position="23"/>
    </location>
</feature>
<feature type="region of interest" description="Disordered" evidence="5">
    <location>
        <begin position="31"/>
        <end position="50"/>
    </location>
</feature>
<feature type="region of interest" description="Disordered" evidence="5">
    <location>
        <begin position="257"/>
        <end position="373"/>
    </location>
</feature>
<feature type="compositionally biased region" description="Basic and acidic residues" evidence="5">
    <location>
        <begin position="270"/>
        <end position="289"/>
    </location>
</feature>
<feature type="compositionally biased region" description="Basic and acidic residues" evidence="5">
    <location>
        <begin position="297"/>
        <end position="352"/>
    </location>
</feature>
<feature type="modified residue" description="Phosphoserine" evidence="1">
    <location>
        <position position="13"/>
    </location>
</feature>
<feature type="modified residue" description="Phosphoserine" evidence="1">
    <location>
        <position position="208"/>
    </location>
</feature>
<feature type="cross-link" description="Glycyl lysine isopeptide (Lys-Gly) (interchain with G-Cter in SUMO2)" evidence="1">
    <location>
        <position position="27"/>
    </location>
</feature>
<feature type="cross-link" description="Glycyl lysine isopeptide (Lys-Gly) (interchain with G-Cter in SUMO2)" evidence="1">
    <location>
        <position position="181"/>
    </location>
</feature>
<feature type="cross-link" description="Glycyl lysine isopeptide (Lys-Gly) (interchain with G-Cter in SUMO2)" evidence="1">
    <location>
        <position position="228"/>
    </location>
</feature>
<feature type="cross-link" description="Glycyl lysine isopeptide (Lys-Gly) (interchain with G-Cter in SUMO2)" evidence="1">
    <location>
        <position position="280"/>
    </location>
</feature>
<feature type="cross-link" description="Glycyl lysine isopeptide (Lys-Gly) (interchain with G-Cter in SUMO2)" evidence="1">
    <location>
        <position position="299"/>
    </location>
</feature>
<feature type="cross-link" description="Glycyl lysine isopeptide (Lys-Gly) (interchain with G-Cter in SUMO2)" evidence="1">
    <location>
        <position position="304"/>
    </location>
</feature>
<feature type="cross-link" description="Glycyl lysine isopeptide (Lys-Gly) (interchain with G-Cter in SUMO2)" evidence="1">
    <location>
        <position position="339"/>
    </location>
</feature>
<feature type="cross-link" description="Glycyl lysine isopeptide (Lys-Gly) (interchain with G-Cter in SUMO2)" evidence="1">
    <location>
        <position position="375"/>
    </location>
</feature>
<feature type="cross-link" description="Glycyl lysine isopeptide (Lys-Gly) (interchain with G-Cter in SUMO2)" evidence="1">
    <location>
        <position position="412"/>
    </location>
</feature>
<feature type="cross-link" description="Glycyl lysine isopeptide (Lys-Gly) (interchain with G-Cter in SUMO2)" evidence="1">
    <location>
        <position position="440"/>
    </location>
</feature>
<feature type="cross-link" description="Glycyl lysine isopeptide (Lys-Gly) (interchain with G-Cter in SUMO2)" evidence="1">
    <location>
        <position position="478"/>
    </location>
</feature>
<feature type="cross-link" description="Glycyl lysine isopeptide (Lys-Gly) (interchain with G-Cter in SUMO2)" evidence="1">
    <location>
        <position position="560"/>
    </location>
</feature>
<proteinExistence type="evidence at transcript level"/>
<keyword id="KW-0238">DNA-binding</keyword>
<keyword id="KW-1017">Isopeptide bond</keyword>
<keyword id="KW-0479">Metal-binding</keyword>
<keyword id="KW-0539">Nucleus</keyword>
<keyword id="KW-0597">Phosphoprotein</keyword>
<keyword id="KW-1185">Reference proteome</keyword>
<keyword id="KW-0677">Repeat</keyword>
<keyword id="KW-0804">Transcription</keyword>
<keyword id="KW-0805">Transcription regulation</keyword>
<keyword id="KW-0832">Ubl conjugation</keyword>
<keyword id="KW-0862">Zinc</keyword>
<keyword id="KW-0863">Zinc-finger</keyword>
<comment type="function">
    <text>May be involved in transcriptional regulation.</text>
</comment>
<comment type="subcellular location">
    <subcellularLocation>
        <location evidence="4">Nucleus</location>
    </subcellularLocation>
</comment>
<comment type="similarity">
    <text evidence="6">Belongs to the krueppel C2H2-type zinc-finger protein family.</text>
</comment>
<organism>
    <name type="scientific">Pongo abelii</name>
    <name type="common">Sumatran orangutan</name>
    <name type="synonym">Pongo pygmaeus abelii</name>
    <dbReference type="NCBI Taxonomy" id="9601"/>
    <lineage>
        <taxon>Eukaryota</taxon>
        <taxon>Metazoa</taxon>
        <taxon>Chordata</taxon>
        <taxon>Craniata</taxon>
        <taxon>Vertebrata</taxon>
        <taxon>Euteleostomi</taxon>
        <taxon>Mammalia</taxon>
        <taxon>Eutheria</taxon>
        <taxon>Euarchontoglires</taxon>
        <taxon>Primates</taxon>
        <taxon>Haplorrhini</taxon>
        <taxon>Catarrhini</taxon>
        <taxon>Hominidae</taxon>
        <taxon>Pongo</taxon>
    </lineage>
</organism>
<name>ZKSC1_PONAB</name>
<accession>Q5R670</accession>